<reference key="1">
    <citation type="journal article" date="2005" name="Nucleic Acids Res.">
        <title>Genome dynamics and diversity of Shigella species, the etiologic agents of bacillary dysentery.</title>
        <authorList>
            <person name="Yang F."/>
            <person name="Yang J."/>
            <person name="Zhang X."/>
            <person name="Chen L."/>
            <person name="Jiang Y."/>
            <person name="Yan Y."/>
            <person name="Tang X."/>
            <person name="Wang J."/>
            <person name="Xiong Z."/>
            <person name="Dong J."/>
            <person name="Xue Y."/>
            <person name="Zhu Y."/>
            <person name="Xu X."/>
            <person name="Sun L."/>
            <person name="Chen S."/>
            <person name="Nie H."/>
            <person name="Peng J."/>
            <person name="Xu J."/>
            <person name="Wang Y."/>
            <person name="Yuan Z."/>
            <person name="Wen Y."/>
            <person name="Yao Z."/>
            <person name="Shen Y."/>
            <person name="Qiang B."/>
            <person name="Hou Y."/>
            <person name="Yu J."/>
            <person name="Jin Q."/>
        </authorList>
    </citation>
    <scope>NUCLEOTIDE SEQUENCE [LARGE SCALE GENOMIC DNA]</scope>
    <source>
        <strain>Sd197</strain>
    </source>
</reference>
<dbReference type="EC" id="2.7.8.13" evidence="1"/>
<dbReference type="EMBL" id="CP000034">
    <property type="protein sequence ID" value="ABB60352.1"/>
    <property type="molecule type" value="Genomic_DNA"/>
</dbReference>
<dbReference type="RefSeq" id="WP_000964134.1">
    <property type="nucleotide sequence ID" value="NC_007606.1"/>
</dbReference>
<dbReference type="RefSeq" id="YP_401841.1">
    <property type="nucleotide sequence ID" value="NC_007606.1"/>
</dbReference>
<dbReference type="SMR" id="Q32K05"/>
<dbReference type="STRING" id="300267.SDY_0117"/>
<dbReference type="EnsemblBacteria" id="ABB60352">
    <property type="protein sequence ID" value="ABB60352"/>
    <property type="gene ID" value="SDY_0117"/>
</dbReference>
<dbReference type="GeneID" id="75169987"/>
<dbReference type="KEGG" id="sdy:SDY_0117"/>
<dbReference type="PATRIC" id="fig|300267.13.peg.136"/>
<dbReference type="HOGENOM" id="CLU_023982_0_0_6"/>
<dbReference type="UniPathway" id="UPA00219"/>
<dbReference type="Proteomes" id="UP000002716">
    <property type="component" value="Chromosome"/>
</dbReference>
<dbReference type="GO" id="GO:0005886">
    <property type="term" value="C:plasma membrane"/>
    <property type="evidence" value="ECO:0007669"/>
    <property type="project" value="UniProtKB-SubCell"/>
</dbReference>
<dbReference type="GO" id="GO:0046872">
    <property type="term" value="F:metal ion binding"/>
    <property type="evidence" value="ECO:0007669"/>
    <property type="project" value="UniProtKB-KW"/>
</dbReference>
<dbReference type="GO" id="GO:0008963">
    <property type="term" value="F:phospho-N-acetylmuramoyl-pentapeptide-transferase activity"/>
    <property type="evidence" value="ECO:0007669"/>
    <property type="project" value="UniProtKB-UniRule"/>
</dbReference>
<dbReference type="GO" id="GO:0051992">
    <property type="term" value="F:UDP-N-acetylmuramoyl-L-alanyl-D-glutamyl-meso-2,6-diaminopimelyl-D-alanyl-D-alanine:undecaprenyl-phosphate transferase activity"/>
    <property type="evidence" value="ECO:0007669"/>
    <property type="project" value="RHEA"/>
</dbReference>
<dbReference type="GO" id="GO:0051301">
    <property type="term" value="P:cell division"/>
    <property type="evidence" value="ECO:0007669"/>
    <property type="project" value="UniProtKB-KW"/>
</dbReference>
<dbReference type="GO" id="GO:0071555">
    <property type="term" value="P:cell wall organization"/>
    <property type="evidence" value="ECO:0007669"/>
    <property type="project" value="UniProtKB-KW"/>
</dbReference>
<dbReference type="GO" id="GO:0009252">
    <property type="term" value="P:peptidoglycan biosynthetic process"/>
    <property type="evidence" value="ECO:0007669"/>
    <property type="project" value="UniProtKB-UniRule"/>
</dbReference>
<dbReference type="GO" id="GO:0008360">
    <property type="term" value="P:regulation of cell shape"/>
    <property type="evidence" value="ECO:0007669"/>
    <property type="project" value="UniProtKB-KW"/>
</dbReference>
<dbReference type="CDD" id="cd06852">
    <property type="entry name" value="GT_MraY"/>
    <property type="match status" value="1"/>
</dbReference>
<dbReference type="HAMAP" id="MF_00038">
    <property type="entry name" value="MraY"/>
    <property type="match status" value="1"/>
</dbReference>
<dbReference type="InterPro" id="IPR000715">
    <property type="entry name" value="Glycosyl_transferase_4"/>
</dbReference>
<dbReference type="InterPro" id="IPR003524">
    <property type="entry name" value="PNAcMuramoyl-5peptid_Trfase"/>
</dbReference>
<dbReference type="InterPro" id="IPR018480">
    <property type="entry name" value="PNAcMuramoyl-5peptid_Trfase_CS"/>
</dbReference>
<dbReference type="NCBIfam" id="TIGR00445">
    <property type="entry name" value="mraY"/>
    <property type="match status" value="1"/>
</dbReference>
<dbReference type="PANTHER" id="PTHR22926">
    <property type="entry name" value="PHOSPHO-N-ACETYLMURAMOYL-PENTAPEPTIDE-TRANSFERASE"/>
    <property type="match status" value="1"/>
</dbReference>
<dbReference type="PANTHER" id="PTHR22926:SF5">
    <property type="entry name" value="PHOSPHO-N-ACETYLMURAMOYL-PENTAPEPTIDE-TRANSFERASE HOMOLOG"/>
    <property type="match status" value="1"/>
</dbReference>
<dbReference type="Pfam" id="PF00953">
    <property type="entry name" value="Glycos_transf_4"/>
    <property type="match status" value="1"/>
</dbReference>
<dbReference type="Pfam" id="PF10555">
    <property type="entry name" value="MraY_sig1"/>
    <property type="match status" value="1"/>
</dbReference>
<dbReference type="PROSITE" id="PS01347">
    <property type="entry name" value="MRAY_1"/>
    <property type="match status" value="1"/>
</dbReference>
<dbReference type="PROSITE" id="PS01348">
    <property type="entry name" value="MRAY_2"/>
    <property type="match status" value="1"/>
</dbReference>
<proteinExistence type="inferred from homology"/>
<organism>
    <name type="scientific">Shigella dysenteriae serotype 1 (strain Sd197)</name>
    <dbReference type="NCBI Taxonomy" id="300267"/>
    <lineage>
        <taxon>Bacteria</taxon>
        <taxon>Pseudomonadati</taxon>
        <taxon>Pseudomonadota</taxon>
        <taxon>Gammaproteobacteria</taxon>
        <taxon>Enterobacterales</taxon>
        <taxon>Enterobacteriaceae</taxon>
        <taxon>Shigella</taxon>
    </lineage>
</organism>
<accession>Q32K05</accession>
<comment type="function">
    <text evidence="1">Catalyzes the initial step of the lipid cycle reactions in the biosynthesis of the cell wall peptidoglycan: transfers peptidoglycan precursor phospho-MurNAc-pentapeptide from UDP-MurNAc-pentapeptide onto the lipid carrier undecaprenyl phosphate, yielding undecaprenyl-pyrophosphoryl-MurNAc-pentapeptide, known as lipid I.</text>
</comment>
<comment type="catalytic activity">
    <reaction evidence="1">
        <text>UDP-N-acetyl-alpha-D-muramoyl-L-alanyl-gamma-D-glutamyl-meso-2,6-diaminopimeloyl-D-alanyl-D-alanine + di-trans,octa-cis-undecaprenyl phosphate = di-trans,octa-cis-undecaprenyl diphospho-N-acetyl-alpha-D-muramoyl-L-alanyl-D-glutamyl-meso-2,6-diaminopimeloyl-D-alanyl-D-alanine + UMP</text>
        <dbReference type="Rhea" id="RHEA:28386"/>
        <dbReference type="ChEBI" id="CHEBI:57865"/>
        <dbReference type="ChEBI" id="CHEBI:60392"/>
        <dbReference type="ChEBI" id="CHEBI:61386"/>
        <dbReference type="ChEBI" id="CHEBI:61387"/>
        <dbReference type="EC" id="2.7.8.13"/>
    </reaction>
</comment>
<comment type="cofactor">
    <cofactor evidence="1">
        <name>Mg(2+)</name>
        <dbReference type="ChEBI" id="CHEBI:18420"/>
    </cofactor>
</comment>
<comment type="pathway">
    <text evidence="1">Cell wall biogenesis; peptidoglycan biosynthesis.</text>
</comment>
<comment type="subcellular location">
    <subcellularLocation>
        <location evidence="1">Cell inner membrane</location>
        <topology evidence="1">Multi-pass membrane protein</topology>
    </subcellularLocation>
</comment>
<comment type="similarity">
    <text evidence="1">Belongs to the glycosyltransferase 4 family. MraY subfamily.</text>
</comment>
<feature type="chain" id="PRO_0000235481" description="Phospho-N-acetylmuramoyl-pentapeptide-transferase">
    <location>
        <begin position="1"/>
        <end position="360"/>
    </location>
</feature>
<feature type="topological domain" description="Periplasmic" evidence="1">
    <location>
        <begin position="1"/>
        <end position="25"/>
    </location>
</feature>
<feature type="transmembrane region" description="Helical" evidence="1">
    <location>
        <begin position="26"/>
        <end position="46"/>
    </location>
</feature>
<feature type="topological domain" description="Cytoplasmic" evidence="1">
    <location>
        <begin position="47"/>
        <end position="71"/>
    </location>
</feature>
<feature type="transmembrane region" description="Helical" evidence="1">
    <location>
        <begin position="72"/>
        <end position="92"/>
    </location>
</feature>
<feature type="topological domain" description="Periplasmic" evidence="1">
    <location>
        <position position="93"/>
    </location>
</feature>
<feature type="transmembrane region" description="Helical" evidence="1">
    <location>
        <begin position="94"/>
        <end position="114"/>
    </location>
</feature>
<feature type="topological domain" description="Cytoplasmic" evidence="1">
    <location>
        <begin position="115"/>
        <end position="131"/>
    </location>
</feature>
<feature type="transmembrane region" description="Helical" evidence="1">
    <location>
        <begin position="132"/>
        <end position="152"/>
    </location>
</feature>
<feature type="topological domain" description="Periplasmic" evidence="1">
    <location>
        <begin position="153"/>
        <end position="167"/>
    </location>
</feature>
<feature type="transmembrane region" description="Helical" evidence="1">
    <location>
        <begin position="168"/>
        <end position="188"/>
    </location>
</feature>
<feature type="topological domain" description="Cytoplasmic" evidence="1">
    <location>
        <begin position="189"/>
        <end position="198"/>
    </location>
</feature>
<feature type="transmembrane region" description="Helical" evidence="1">
    <location>
        <begin position="199"/>
        <end position="219"/>
    </location>
</feature>
<feature type="topological domain" description="Periplasmic" evidence="1">
    <location>
        <begin position="220"/>
        <end position="235"/>
    </location>
</feature>
<feature type="transmembrane region" description="Helical" evidence="1">
    <location>
        <begin position="236"/>
        <end position="256"/>
    </location>
</feature>
<feature type="topological domain" description="Cytoplasmic" evidence="1">
    <location>
        <begin position="257"/>
        <end position="262"/>
    </location>
</feature>
<feature type="transmembrane region" description="Helical" evidence="1">
    <location>
        <begin position="263"/>
        <end position="283"/>
    </location>
</feature>
<feature type="topological domain" description="Periplasmic" evidence="1">
    <location>
        <begin position="284"/>
        <end position="287"/>
    </location>
</feature>
<feature type="transmembrane region" description="Helical" evidence="1">
    <location>
        <begin position="288"/>
        <end position="308"/>
    </location>
</feature>
<feature type="topological domain" description="Cytoplasmic" evidence="1">
    <location>
        <begin position="309"/>
        <end position="337"/>
    </location>
</feature>
<feature type="transmembrane region" description="Helical" evidence="1">
    <location>
        <begin position="338"/>
        <end position="358"/>
    </location>
</feature>
<feature type="topological domain" description="Periplasmic" evidence="1">
    <location>
        <begin position="359"/>
        <end position="360"/>
    </location>
</feature>
<protein>
    <recommendedName>
        <fullName evidence="1">Phospho-N-acetylmuramoyl-pentapeptide-transferase</fullName>
        <ecNumber evidence="1">2.7.8.13</ecNumber>
    </recommendedName>
    <alternativeName>
        <fullName evidence="1">UDP-MurNAc-pentapeptide phosphotransferase</fullName>
    </alternativeName>
</protein>
<gene>
    <name evidence="1" type="primary">mraY</name>
    <name type="ordered locus">SDY_0117</name>
</gene>
<keyword id="KW-0131">Cell cycle</keyword>
<keyword id="KW-0132">Cell division</keyword>
<keyword id="KW-0997">Cell inner membrane</keyword>
<keyword id="KW-1003">Cell membrane</keyword>
<keyword id="KW-0133">Cell shape</keyword>
<keyword id="KW-0961">Cell wall biogenesis/degradation</keyword>
<keyword id="KW-0460">Magnesium</keyword>
<keyword id="KW-0472">Membrane</keyword>
<keyword id="KW-0479">Metal-binding</keyword>
<keyword id="KW-0573">Peptidoglycan synthesis</keyword>
<keyword id="KW-1185">Reference proteome</keyword>
<keyword id="KW-0808">Transferase</keyword>
<keyword id="KW-0812">Transmembrane</keyword>
<keyword id="KW-1133">Transmembrane helix</keyword>
<sequence length="360" mass="39903">MLVWLAEHLVKYYSGFNVFSYLTFRAIVSLLTALFISLWMGPRMIAHLQKLSFGQVVRNDGPESHFSKRGTPTMGGIMILTAIVISVLLWAYPSNPYVWCVLVVLVGYGVIGFVDDYRKVVRKDTKGLIARWKYFWMSVIALGVAFALYLVGKDTPATQLVVPFFKDVMPQLGLFYILLAYFVIVGTGNAVNLTDGLDGLAIMPTVFVAGGFALVAWATGNMNFASYLHIPYLRHAGELVIVCTAIVGAGLGFLWFNTYPAQVFMGDVGSLALGGALGIIAVLLRQEFLLVIMGGVFVVETLSVILQVGSFKLRGQRIFRMAPIHHHYELKGWPEPRVIVRFWIISLMLVLIGLATLKVR</sequence>
<evidence type="ECO:0000255" key="1">
    <source>
        <dbReference type="HAMAP-Rule" id="MF_00038"/>
    </source>
</evidence>
<name>MRAY_SHIDS</name>